<gene>
    <name evidence="1" type="primary">gcvPA</name>
    <name type="ordered locus">TON_0213</name>
</gene>
<reference key="1">
    <citation type="journal article" date="2008" name="J. Bacteriol.">
        <title>The complete genome sequence of Thermococcus onnurineus NA1 reveals a mixed heterotrophic and carboxydotrophic metabolism.</title>
        <authorList>
            <person name="Lee H.S."/>
            <person name="Kang S.G."/>
            <person name="Bae S.S."/>
            <person name="Lim J.K."/>
            <person name="Cho Y."/>
            <person name="Kim Y.J."/>
            <person name="Jeon J.H."/>
            <person name="Cha S.-S."/>
            <person name="Kwon K.K."/>
            <person name="Kim H.-T."/>
            <person name="Park C.-J."/>
            <person name="Lee H.-W."/>
            <person name="Kim S.I."/>
            <person name="Chun J."/>
            <person name="Colwell R.R."/>
            <person name="Kim S.-J."/>
            <person name="Lee J.-H."/>
        </authorList>
    </citation>
    <scope>NUCLEOTIDE SEQUENCE [LARGE SCALE GENOMIC DNA]</scope>
    <source>
        <strain>NA1</strain>
    </source>
</reference>
<dbReference type="EC" id="1.4.4.2" evidence="1"/>
<dbReference type="EMBL" id="CP000855">
    <property type="protein sequence ID" value="ACJ15698.1"/>
    <property type="molecule type" value="Genomic_DNA"/>
</dbReference>
<dbReference type="RefSeq" id="WP_012571171.1">
    <property type="nucleotide sequence ID" value="NC_011529.1"/>
</dbReference>
<dbReference type="SMR" id="B6YT11"/>
<dbReference type="STRING" id="523850.TON_0213"/>
<dbReference type="GeneID" id="7017870"/>
<dbReference type="KEGG" id="ton:TON_0213"/>
<dbReference type="PATRIC" id="fig|523850.10.peg.215"/>
<dbReference type="eggNOG" id="arCOG00077">
    <property type="taxonomic scope" value="Archaea"/>
</dbReference>
<dbReference type="HOGENOM" id="CLU_004620_0_2_2"/>
<dbReference type="OrthoDB" id="17655at2157"/>
<dbReference type="Proteomes" id="UP000002727">
    <property type="component" value="Chromosome"/>
</dbReference>
<dbReference type="GO" id="GO:0004375">
    <property type="term" value="F:glycine dehydrogenase (decarboxylating) activity"/>
    <property type="evidence" value="ECO:0007669"/>
    <property type="project" value="UniProtKB-EC"/>
</dbReference>
<dbReference type="GO" id="GO:0019464">
    <property type="term" value="P:glycine decarboxylation via glycine cleavage system"/>
    <property type="evidence" value="ECO:0007669"/>
    <property type="project" value="UniProtKB-UniRule"/>
</dbReference>
<dbReference type="GO" id="GO:0009116">
    <property type="term" value="P:nucleoside metabolic process"/>
    <property type="evidence" value="ECO:0007669"/>
    <property type="project" value="InterPro"/>
</dbReference>
<dbReference type="CDD" id="cd00613">
    <property type="entry name" value="GDC-P"/>
    <property type="match status" value="1"/>
</dbReference>
<dbReference type="Gene3D" id="3.90.1150.10">
    <property type="entry name" value="Aspartate Aminotransferase, domain 1"/>
    <property type="match status" value="1"/>
</dbReference>
<dbReference type="Gene3D" id="3.40.640.10">
    <property type="entry name" value="Type I PLP-dependent aspartate aminotransferase-like (Major domain)"/>
    <property type="match status" value="1"/>
</dbReference>
<dbReference type="HAMAP" id="MF_00712">
    <property type="entry name" value="GcvPA"/>
    <property type="match status" value="1"/>
</dbReference>
<dbReference type="InterPro" id="IPR023010">
    <property type="entry name" value="GcvPA"/>
</dbReference>
<dbReference type="InterPro" id="IPR049315">
    <property type="entry name" value="GDC-P_N"/>
</dbReference>
<dbReference type="InterPro" id="IPR020581">
    <property type="entry name" value="GDC_P"/>
</dbReference>
<dbReference type="InterPro" id="IPR015424">
    <property type="entry name" value="PyrdxlP-dep_Trfase"/>
</dbReference>
<dbReference type="InterPro" id="IPR015421">
    <property type="entry name" value="PyrdxlP-dep_Trfase_major"/>
</dbReference>
<dbReference type="InterPro" id="IPR015422">
    <property type="entry name" value="PyrdxlP-dep_Trfase_small"/>
</dbReference>
<dbReference type="NCBIfam" id="NF001696">
    <property type="entry name" value="PRK00451.1"/>
    <property type="match status" value="1"/>
</dbReference>
<dbReference type="PANTHER" id="PTHR42806">
    <property type="entry name" value="GLYCINE CLEAVAGE SYSTEM P-PROTEIN"/>
    <property type="match status" value="1"/>
</dbReference>
<dbReference type="PANTHER" id="PTHR42806:SF1">
    <property type="entry name" value="GLYCINE DEHYDROGENASE (DECARBOXYLATING)"/>
    <property type="match status" value="1"/>
</dbReference>
<dbReference type="Pfam" id="PF02347">
    <property type="entry name" value="GDC-P"/>
    <property type="match status" value="1"/>
</dbReference>
<dbReference type="PIRSF" id="PIRSF006815">
    <property type="entry name" value="GcvPA"/>
    <property type="match status" value="1"/>
</dbReference>
<dbReference type="SUPFAM" id="SSF53383">
    <property type="entry name" value="PLP-dependent transferases"/>
    <property type="match status" value="1"/>
</dbReference>
<keyword id="KW-0560">Oxidoreductase</keyword>
<organism>
    <name type="scientific">Thermococcus onnurineus (strain NA1)</name>
    <dbReference type="NCBI Taxonomy" id="523850"/>
    <lineage>
        <taxon>Archaea</taxon>
        <taxon>Methanobacteriati</taxon>
        <taxon>Methanobacteriota</taxon>
        <taxon>Thermococci</taxon>
        <taxon>Thermococcales</taxon>
        <taxon>Thermococcaceae</taxon>
        <taxon>Thermococcus</taxon>
    </lineage>
</organism>
<sequence>MGKHYLPNSAHKDEMLKKIGFNSIEDLFSDVPKGMVKEFNLPEGRSEYEVFLELNEVLSKNKTVLEMPSFLGAGTYFHYIPAHVKYLIERSEFLTAYTPYQPEISQGMLQALFEYQSLIAELVGLPIVNSSMYDWGTAMAEAALMSARVTRKNKFVVPEHMSPEKKKVLHTYTAGPGLEIEYVNWNERGQLDLEELKEKVEGAAGVYVEMPNFFGILEEEIRAIGEIAHDAGALFVVGVDPTILGIVEAPGELGADIVVGEAAYFGNPMNFGGPRAGIFAVRDDKKLIRQMPGRIIGMTKDADGKRAFVMTLQTREQHIRRAKATSNICSNEALVAVAAAIHLASLGPRGLRELGEVILKNTAYLKKRLSEVAEIPFEGVNFKDVLVRFEKSYEEIHEVLLERNIHGGFYLKPHFPELGESALFAATETTRKEWVDALIEALREVA</sequence>
<accession>B6YT11</accession>
<proteinExistence type="inferred from homology"/>
<feature type="chain" id="PRO_1000132488" description="Probable glycine dehydrogenase (decarboxylating) subunit 1">
    <location>
        <begin position="1"/>
        <end position="446"/>
    </location>
</feature>
<protein>
    <recommendedName>
        <fullName evidence="1">Probable glycine dehydrogenase (decarboxylating) subunit 1</fullName>
        <ecNumber evidence="1">1.4.4.2</ecNumber>
    </recommendedName>
    <alternativeName>
        <fullName evidence="1">Glycine cleavage system P-protein subunit 1</fullName>
    </alternativeName>
    <alternativeName>
        <fullName evidence="1">Glycine decarboxylase subunit 1</fullName>
    </alternativeName>
    <alternativeName>
        <fullName evidence="1">Glycine dehydrogenase (aminomethyl-transferring) subunit 1</fullName>
    </alternativeName>
</protein>
<name>GCSPA_THEON</name>
<evidence type="ECO:0000255" key="1">
    <source>
        <dbReference type="HAMAP-Rule" id="MF_00712"/>
    </source>
</evidence>
<comment type="function">
    <text evidence="1">The glycine cleavage system catalyzes the degradation of glycine. The P protein binds the alpha-amino group of glycine through its pyridoxal phosphate cofactor; CO(2) is released and the remaining methylamine moiety is then transferred to the lipoamide cofactor of the H protein.</text>
</comment>
<comment type="catalytic activity">
    <reaction evidence="1">
        <text>N(6)-[(R)-lipoyl]-L-lysyl-[glycine-cleavage complex H protein] + glycine + H(+) = N(6)-[(R)-S(8)-aminomethyldihydrolipoyl]-L-lysyl-[glycine-cleavage complex H protein] + CO2</text>
        <dbReference type="Rhea" id="RHEA:24304"/>
        <dbReference type="Rhea" id="RHEA-COMP:10494"/>
        <dbReference type="Rhea" id="RHEA-COMP:10495"/>
        <dbReference type="ChEBI" id="CHEBI:15378"/>
        <dbReference type="ChEBI" id="CHEBI:16526"/>
        <dbReference type="ChEBI" id="CHEBI:57305"/>
        <dbReference type="ChEBI" id="CHEBI:83099"/>
        <dbReference type="ChEBI" id="CHEBI:83143"/>
        <dbReference type="EC" id="1.4.4.2"/>
    </reaction>
</comment>
<comment type="subunit">
    <text evidence="1">The glycine cleavage system is composed of four proteins: P, T, L and H. In this organism, the P 'protein' is a heterodimer of two subunits.</text>
</comment>
<comment type="similarity">
    <text evidence="1">Belongs to the GcvP family. N-terminal subunit subfamily.</text>
</comment>